<evidence type="ECO:0000255" key="1">
    <source>
        <dbReference type="HAMAP-Rule" id="MF_00471"/>
    </source>
</evidence>
<organism>
    <name type="scientific">Salmonella newport (strain SL254)</name>
    <dbReference type="NCBI Taxonomy" id="423368"/>
    <lineage>
        <taxon>Bacteria</taxon>
        <taxon>Pseudomonadati</taxon>
        <taxon>Pseudomonadota</taxon>
        <taxon>Gammaproteobacteria</taxon>
        <taxon>Enterobacterales</taxon>
        <taxon>Enterobacteriaceae</taxon>
        <taxon>Salmonella</taxon>
    </lineage>
</organism>
<protein>
    <recommendedName>
        <fullName evidence="1">Regulator of ribonuclease activity A</fullName>
    </recommendedName>
</protein>
<comment type="function">
    <text evidence="1">Globally modulates RNA abundance by binding to RNase E (Rne) and regulating its endonucleolytic activity. Can modulate Rne action in a substrate-dependent manner by altering the composition of the degradosome. Modulates RNA-binding and helicase activities of the degradosome.</text>
</comment>
<comment type="subunit">
    <text evidence="1">Homotrimer. Binds to both RNA-binding sites in the C-terminal region of Rne and to RhlB.</text>
</comment>
<comment type="subcellular location">
    <subcellularLocation>
        <location evidence="1">Cytoplasm</location>
    </subcellularLocation>
</comment>
<comment type="similarity">
    <text evidence="1">Belongs to the RraA family.</text>
</comment>
<name>RRAA_SALNS</name>
<sequence>MKYDTSELCDIYQEDVNVVEPLFSNFGGRSSFGGQIITVKCFEDNGLLYDLLEQNGRGRVLLVDGGGSVRRALVDAELARLATQNEWEGLVIYGAVRQVDDLEELDIGIQAIAAIPVGAAGEGIGESDVRVNFGGVTFFSGDHLYADNTGIILSEDPLDIE</sequence>
<dbReference type="EMBL" id="CP001113">
    <property type="protein sequence ID" value="ACF64582.1"/>
    <property type="molecule type" value="Genomic_DNA"/>
</dbReference>
<dbReference type="RefSeq" id="WP_000872918.1">
    <property type="nucleotide sequence ID" value="NZ_CCMR01000001.1"/>
</dbReference>
<dbReference type="SMR" id="B4T0T6"/>
<dbReference type="KEGG" id="see:SNSL254_A4419"/>
<dbReference type="HOGENOM" id="CLU_072626_4_0_6"/>
<dbReference type="Proteomes" id="UP000008824">
    <property type="component" value="Chromosome"/>
</dbReference>
<dbReference type="GO" id="GO:0005829">
    <property type="term" value="C:cytosol"/>
    <property type="evidence" value="ECO:0007669"/>
    <property type="project" value="TreeGrafter"/>
</dbReference>
<dbReference type="GO" id="GO:0060698">
    <property type="term" value="F:endoribonuclease inhibitor activity"/>
    <property type="evidence" value="ECO:0007669"/>
    <property type="project" value="UniProtKB-UniRule"/>
</dbReference>
<dbReference type="GO" id="GO:0019899">
    <property type="term" value="F:enzyme binding"/>
    <property type="evidence" value="ECO:0007669"/>
    <property type="project" value="UniProtKB-UniRule"/>
</dbReference>
<dbReference type="GO" id="GO:1902369">
    <property type="term" value="P:negative regulation of RNA catabolic process"/>
    <property type="evidence" value="ECO:0007669"/>
    <property type="project" value="TreeGrafter"/>
</dbReference>
<dbReference type="CDD" id="cd16841">
    <property type="entry name" value="RraA_family"/>
    <property type="match status" value="1"/>
</dbReference>
<dbReference type="FunFam" id="3.50.30.40:FF:000001">
    <property type="entry name" value="Regulator of ribonuclease activity A"/>
    <property type="match status" value="1"/>
</dbReference>
<dbReference type="Gene3D" id="3.50.30.40">
    <property type="entry name" value="Ribonuclease E inhibitor RraA/RraA-like"/>
    <property type="match status" value="1"/>
</dbReference>
<dbReference type="HAMAP" id="MF_00471">
    <property type="entry name" value="RraA"/>
    <property type="match status" value="1"/>
</dbReference>
<dbReference type="InterPro" id="IPR010203">
    <property type="entry name" value="RraA"/>
</dbReference>
<dbReference type="InterPro" id="IPR005493">
    <property type="entry name" value="RraA/RraA-like"/>
</dbReference>
<dbReference type="InterPro" id="IPR036704">
    <property type="entry name" value="RraA/RraA-like_sf"/>
</dbReference>
<dbReference type="InterPro" id="IPR014339">
    <property type="entry name" value="RraA_gpbac"/>
</dbReference>
<dbReference type="NCBIfam" id="TIGR01935">
    <property type="entry name" value="NOT-MenG"/>
    <property type="match status" value="1"/>
</dbReference>
<dbReference type="NCBIfam" id="NF006875">
    <property type="entry name" value="PRK09372.1"/>
    <property type="match status" value="1"/>
</dbReference>
<dbReference type="NCBIfam" id="TIGR02998">
    <property type="entry name" value="RraA_entero"/>
    <property type="match status" value="1"/>
</dbReference>
<dbReference type="PANTHER" id="PTHR33254">
    <property type="entry name" value="4-HYDROXY-4-METHYL-2-OXOGLUTARATE ALDOLASE 3-RELATED"/>
    <property type="match status" value="1"/>
</dbReference>
<dbReference type="PANTHER" id="PTHR33254:SF29">
    <property type="entry name" value="REGULATOR OF RIBONUCLEASE ACTIVITY A"/>
    <property type="match status" value="1"/>
</dbReference>
<dbReference type="Pfam" id="PF03737">
    <property type="entry name" value="RraA-like"/>
    <property type="match status" value="1"/>
</dbReference>
<dbReference type="SUPFAM" id="SSF89562">
    <property type="entry name" value="RraA-like"/>
    <property type="match status" value="1"/>
</dbReference>
<gene>
    <name evidence="1" type="primary">rraA</name>
    <name type="ordered locus">SNSL254_A4419</name>
</gene>
<keyword id="KW-0963">Cytoplasm</keyword>
<feature type="chain" id="PRO_1000194876" description="Regulator of ribonuclease activity A">
    <location>
        <begin position="1"/>
        <end position="161"/>
    </location>
</feature>
<accession>B4T0T6</accession>
<reference key="1">
    <citation type="journal article" date="2011" name="J. Bacteriol.">
        <title>Comparative genomics of 28 Salmonella enterica isolates: evidence for CRISPR-mediated adaptive sublineage evolution.</title>
        <authorList>
            <person name="Fricke W.F."/>
            <person name="Mammel M.K."/>
            <person name="McDermott P.F."/>
            <person name="Tartera C."/>
            <person name="White D.G."/>
            <person name="Leclerc J.E."/>
            <person name="Ravel J."/>
            <person name="Cebula T.A."/>
        </authorList>
    </citation>
    <scope>NUCLEOTIDE SEQUENCE [LARGE SCALE GENOMIC DNA]</scope>
    <source>
        <strain>SL254</strain>
    </source>
</reference>
<proteinExistence type="inferred from homology"/>